<comment type="function">
    <text evidence="1">Part of the ABC transporter complex PstSACB involved in phosphate import. Responsible for energy coupling to the transport system.</text>
</comment>
<comment type="catalytic activity">
    <reaction evidence="1">
        <text>phosphate(out) + ATP + H2O = ADP + 2 phosphate(in) + H(+)</text>
        <dbReference type="Rhea" id="RHEA:24440"/>
        <dbReference type="ChEBI" id="CHEBI:15377"/>
        <dbReference type="ChEBI" id="CHEBI:15378"/>
        <dbReference type="ChEBI" id="CHEBI:30616"/>
        <dbReference type="ChEBI" id="CHEBI:43474"/>
        <dbReference type="ChEBI" id="CHEBI:456216"/>
        <dbReference type="EC" id="7.3.2.1"/>
    </reaction>
</comment>
<comment type="subunit">
    <text evidence="1">The complex is composed of two ATP-binding proteins (PstB), two transmembrane proteins (PstC and PstA) and a solute-binding protein (PstS).</text>
</comment>
<comment type="subcellular location">
    <subcellularLocation>
        <location evidence="1">Cell inner membrane</location>
        <topology evidence="1">Peripheral membrane protein</topology>
    </subcellularLocation>
</comment>
<comment type="similarity">
    <text evidence="1">Belongs to the ABC transporter superfamily. Phosphate importer (TC 3.A.1.7) family.</text>
</comment>
<feature type="chain" id="PRO_0000092927" description="Phosphate import ATP-binding protein PstB 1">
    <location>
        <begin position="1"/>
        <end position="272"/>
    </location>
</feature>
<feature type="domain" description="ABC transporter" evidence="1">
    <location>
        <begin position="26"/>
        <end position="267"/>
    </location>
</feature>
<feature type="binding site" evidence="1">
    <location>
        <begin position="58"/>
        <end position="65"/>
    </location>
    <ligand>
        <name>ATP</name>
        <dbReference type="ChEBI" id="CHEBI:30616"/>
    </ligand>
</feature>
<gene>
    <name evidence="1" type="primary">pstB1</name>
    <name type="ordered locus">VP0576</name>
</gene>
<proteinExistence type="inferred from homology"/>
<evidence type="ECO:0000255" key="1">
    <source>
        <dbReference type="HAMAP-Rule" id="MF_01702"/>
    </source>
</evidence>
<name>PSTB1_VIBPA</name>
<sequence length="272" mass="30515">MFNFDNTLGYEPPLDVHNLTDEQTAISIENLNLFYGQAQALHDISMRIPKGRVTAFIGPSGCGKSTLLRCINRMNDLVEGCKVTGKVRLHGKNVYHPNVDVATLRRRVGMVFQRPNPFPKSIYENVVYGLRLQGVKNSRTLDDAVERSLRSAALWDEVKDRLHENAFGLSGGQQQRLVIARAVAIEPEVLLLDEPTSALDPISTLTIEELINELKTQYTVVIVTHNMQQAARVSDHTAFIHMGKLIEYSDADSIFTSPMKKQTEDYITGRYG</sequence>
<reference key="1">
    <citation type="journal article" date="2003" name="Lancet">
        <title>Genome sequence of Vibrio parahaemolyticus: a pathogenic mechanism distinct from that of V. cholerae.</title>
        <authorList>
            <person name="Makino K."/>
            <person name="Oshima K."/>
            <person name="Kurokawa K."/>
            <person name="Yokoyama K."/>
            <person name="Uda T."/>
            <person name="Tagomori K."/>
            <person name="Iijima Y."/>
            <person name="Najima M."/>
            <person name="Nakano M."/>
            <person name="Yamashita A."/>
            <person name="Kubota Y."/>
            <person name="Kimura S."/>
            <person name="Yasunaga T."/>
            <person name="Honda T."/>
            <person name="Shinagawa H."/>
            <person name="Hattori M."/>
            <person name="Iida T."/>
        </authorList>
    </citation>
    <scope>NUCLEOTIDE SEQUENCE [LARGE SCALE GENOMIC DNA]</scope>
    <source>
        <strain>RIMD 2210633</strain>
    </source>
</reference>
<keyword id="KW-0067">ATP-binding</keyword>
<keyword id="KW-0997">Cell inner membrane</keyword>
<keyword id="KW-1003">Cell membrane</keyword>
<keyword id="KW-0472">Membrane</keyword>
<keyword id="KW-0547">Nucleotide-binding</keyword>
<keyword id="KW-0592">Phosphate transport</keyword>
<keyword id="KW-1278">Translocase</keyword>
<keyword id="KW-0813">Transport</keyword>
<accession>Q87S48</accession>
<dbReference type="EC" id="7.3.2.1" evidence="1"/>
<dbReference type="EMBL" id="BA000031">
    <property type="protein sequence ID" value="BAC58839.1"/>
    <property type="molecule type" value="Genomic_DNA"/>
</dbReference>
<dbReference type="RefSeq" id="NP_796955.1">
    <property type="nucleotide sequence ID" value="NC_004603.1"/>
</dbReference>
<dbReference type="SMR" id="Q87S48"/>
<dbReference type="GeneID" id="1188051"/>
<dbReference type="KEGG" id="vpa:VP0576"/>
<dbReference type="PATRIC" id="fig|223926.6.peg.547"/>
<dbReference type="eggNOG" id="COG1117">
    <property type="taxonomic scope" value="Bacteria"/>
</dbReference>
<dbReference type="HOGENOM" id="CLU_000604_1_22_6"/>
<dbReference type="Proteomes" id="UP000002493">
    <property type="component" value="Chromosome 1"/>
</dbReference>
<dbReference type="GO" id="GO:0005886">
    <property type="term" value="C:plasma membrane"/>
    <property type="evidence" value="ECO:0007669"/>
    <property type="project" value="UniProtKB-SubCell"/>
</dbReference>
<dbReference type="GO" id="GO:0005524">
    <property type="term" value="F:ATP binding"/>
    <property type="evidence" value="ECO:0007669"/>
    <property type="project" value="UniProtKB-KW"/>
</dbReference>
<dbReference type="GO" id="GO:0016887">
    <property type="term" value="F:ATP hydrolysis activity"/>
    <property type="evidence" value="ECO:0007669"/>
    <property type="project" value="InterPro"/>
</dbReference>
<dbReference type="GO" id="GO:0015415">
    <property type="term" value="F:ATPase-coupled phosphate ion transmembrane transporter activity"/>
    <property type="evidence" value="ECO:0007669"/>
    <property type="project" value="UniProtKB-EC"/>
</dbReference>
<dbReference type="GO" id="GO:0035435">
    <property type="term" value="P:phosphate ion transmembrane transport"/>
    <property type="evidence" value="ECO:0007669"/>
    <property type="project" value="InterPro"/>
</dbReference>
<dbReference type="CDD" id="cd03260">
    <property type="entry name" value="ABC_PstB_phosphate_transporter"/>
    <property type="match status" value="1"/>
</dbReference>
<dbReference type="FunFam" id="3.40.50.300:FF:000132">
    <property type="entry name" value="Phosphate import ATP-binding protein PstB"/>
    <property type="match status" value="1"/>
</dbReference>
<dbReference type="Gene3D" id="3.40.50.300">
    <property type="entry name" value="P-loop containing nucleotide triphosphate hydrolases"/>
    <property type="match status" value="1"/>
</dbReference>
<dbReference type="InterPro" id="IPR003593">
    <property type="entry name" value="AAA+_ATPase"/>
</dbReference>
<dbReference type="InterPro" id="IPR003439">
    <property type="entry name" value="ABC_transporter-like_ATP-bd"/>
</dbReference>
<dbReference type="InterPro" id="IPR017871">
    <property type="entry name" value="ABC_transporter-like_CS"/>
</dbReference>
<dbReference type="InterPro" id="IPR027417">
    <property type="entry name" value="P-loop_NTPase"/>
</dbReference>
<dbReference type="InterPro" id="IPR005670">
    <property type="entry name" value="PstB-like"/>
</dbReference>
<dbReference type="NCBIfam" id="TIGR00972">
    <property type="entry name" value="3a0107s01c2"/>
    <property type="match status" value="1"/>
</dbReference>
<dbReference type="PANTHER" id="PTHR43423">
    <property type="entry name" value="ABC TRANSPORTER I FAMILY MEMBER 17"/>
    <property type="match status" value="1"/>
</dbReference>
<dbReference type="PANTHER" id="PTHR43423:SF12">
    <property type="entry name" value="IRON EXPORT ATP-BINDING PROTEIN FETA-RELATED"/>
    <property type="match status" value="1"/>
</dbReference>
<dbReference type="Pfam" id="PF00005">
    <property type="entry name" value="ABC_tran"/>
    <property type="match status" value="1"/>
</dbReference>
<dbReference type="SMART" id="SM00382">
    <property type="entry name" value="AAA"/>
    <property type="match status" value="1"/>
</dbReference>
<dbReference type="SUPFAM" id="SSF52540">
    <property type="entry name" value="P-loop containing nucleoside triphosphate hydrolases"/>
    <property type="match status" value="1"/>
</dbReference>
<dbReference type="PROSITE" id="PS00211">
    <property type="entry name" value="ABC_TRANSPORTER_1"/>
    <property type="match status" value="1"/>
</dbReference>
<dbReference type="PROSITE" id="PS50893">
    <property type="entry name" value="ABC_TRANSPORTER_2"/>
    <property type="match status" value="1"/>
</dbReference>
<dbReference type="PROSITE" id="PS51238">
    <property type="entry name" value="PSTB"/>
    <property type="match status" value="1"/>
</dbReference>
<protein>
    <recommendedName>
        <fullName evidence="1">Phosphate import ATP-binding protein PstB 1</fullName>
        <ecNumber evidence="1">7.3.2.1</ecNumber>
    </recommendedName>
    <alternativeName>
        <fullName evidence="1">ABC phosphate transporter 1</fullName>
    </alternativeName>
    <alternativeName>
        <fullName evidence="1">Phosphate-transporting ATPase 1</fullName>
    </alternativeName>
</protein>
<organism>
    <name type="scientific">Vibrio parahaemolyticus serotype O3:K6 (strain RIMD 2210633)</name>
    <dbReference type="NCBI Taxonomy" id="223926"/>
    <lineage>
        <taxon>Bacteria</taxon>
        <taxon>Pseudomonadati</taxon>
        <taxon>Pseudomonadota</taxon>
        <taxon>Gammaproteobacteria</taxon>
        <taxon>Vibrionales</taxon>
        <taxon>Vibrionaceae</taxon>
        <taxon>Vibrio</taxon>
    </lineage>
</organism>